<organism>
    <name type="scientific">Haemophilus influenzae (strain ATCC 51907 / DSM 11121 / KW20 / Rd)</name>
    <dbReference type="NCBI Taxonomy" id="71421"/>
    <lineage>
        <taxon>Bacteria</taxon>
        <taxon>Pseudomonadati</taxon>
        <taxon>Pseudomonadota</taxon>
        <taxon>Gammaproteobacteria</taxon>
        <taxon>Pasteurellales</taxon>
        <taxon>Pasteurellaceae</taxon>
        <taxon>Haemophilus</taxon>
    </lineage>
</organism>
<keyword id="KW-0032">Aminotransferase</keyword>
<keyword id="KW-0963">Cytoplasm</keyword>
<keyword id="KW-0663">Pyridoxal phosphate</keyword>
<keyword id="KW-1185">Reference proteome</keyword>
<keyword id="KW-0808">Transferase</keyword>
<comment type="catalytic activity">
    <reaction>
        <text>L-aspartate + 2-oxoglutarate = oxaloacetate + L-glutamate</text>
        <dbReference type="Rhea" id="RHEA:21824"/>
        <dbReference type="ChEBI" id="CHEBI:16452"/>
        <dbReference type="ChEBI" id="CHEBI:16810"/>
        <dbReference type="ChEBI" id="CHEBI:29985"/>
        <dbReference type="ChEBI" id="CHEBI:29991"/>
        <dbReference type="EC" id="2.6.1.1"/>
    </reaction>
</comment>
<comment type="cofactor">
    <cofactor evidence="1">
        <name>pyridoxal 5'-phosphate</name>
        <dbReference type="ChEBI" id="CHEBI:597326"/>
    </cofactor>
</comment>
<comment type="subunit">
    <text evidence="1">Homodimer.</text>
</comment>
<comment type="subcellular location">
    <subcellularLocation>
        <location>Cytoplasm</location>
    </subcellularLocation>
</comment>
<comment type="similarity">
    <text evidence="2">Belongs to the class-I pyridoxal-phosphate-dependent aminotransferase family.</text>
</comment>
<name>AAT_HAEIN</name>
<protein>
    <recommendedName>
        <fullName>Aspartate aminotransferase</fullName>
        <shortName>AspAT</shortName>
        <ecNumber>2.6.1.1</ecNumber>
    </recommendedName>
    <alternativeName>
        <fullName>Transaminase A</fullName>
    </alternativeName>
</protein>
<reference key="1">
    <citation type="journal article" date="1995" name="Science">
        <title>Whole-genome random sequencing and assembly of Haemophilus influenzae Rd.</title>
        <authorList>
            <person name="Fleischmann R.D."/>
            <person name="Adams M.D."/>
            <person name="White O."/>
            <person name="Clayton R.A."/>
            <person name="Kirkness E.F."/>
            <person name="Kerlavage A.R."/>
            <person name="Bult C.J."/>
            <person name="Tomb J.-F."/>
            <person name="Dougherty B.A."/>
            <person name="Merrick J.M."/>
            <person name="McKenney K."/>
            <person name="Sutton G.G."/>
            <person name="FitzHugh W."/>
            <person name="Fields C.A."/>
            <person name="Gocayne J.D."/>
            <person name="Scott J.D."/>
            <person name="Shirley R."/>
            <person name="Liu L.-I."/>
            <person name="Glodek A."/>
            <person name="Kelley J.M."/>
            <person name="Weidman J.F."/>
            <person name="Phillips C.A."/>
            <person name="Spriggs T."/>
            <person name="Hedblom E."/>
            <person name="Cotton M.D."/>
            <person name="Utterback T.R."/>
            <person name="Hanna M.C."/>
            <person name="Nguyen D.T."/>
            <person name="Saudek D.M."/>
            <person name="Brandon R.C."/>
            <person name="Fine L.D."/>
            <person name="Fritchman J.L."/>
            <person name="Fuhrmann J.L."/>
            <person name="Geoghagen N.S.M."/>
            <person name="Gnehm C.L."/>
            <person name="McDonald L.A."/>
            <person name="Small K.V."/>
            <person name="Fraser C.M."/>
            <person name="Smith H.O."/>
            <person name="Venter J.C."/>
        </authorList>
    </citation>
    <scope>NUCLEOTIDE SEQUENCE [LARGE SCALE GENOMIC DNA]</scope>
    <source>
        <strain>ATCC 51907 / DSM 11121 / KW20 / Rd</strain>
    </source>
</reference>
<dbReference type="EC" id="2.6.1.1"/>
<dbReference type="EMBL" id="L42023">
    <property type="protein sequence ID" value="AAC23265.1"/>
    <property type="molecule type" value="Genomic_DNA"/>
</dbReference>
<dbReference type="PIR" id="I64132">
    <property type="entry name" value="I64132"/>
</dbReference>
<dbReference type="RefSeq" id="NP_439759.1">
    <property type="nucleotide sequence ID" value="NC_000907.1"/>
</dbReference>
<dbReference type="SMR" id="P44425"/>
<dbReference type="STRING" id="71421.HI_1617"/>
<dbReference type="EnsemblBacteria" id="AAC23265">
    <property type="protein sequence ID" value="AAC23265"/>
    <property type="gene ID" value="HI_1617"/>
</dbReference>
<dbReference type="KEGG" id="hin:HI_1617"/>
<dbReference type="PATRIC" id="fig|71421.8.peg.1691"/>
<dbReference type="eggNOG" id="COG1448">
    <property type="taxonomic scope" value="Bacteria"/>
</dbReference>
<dbReference type="HOGENOM" id="CLU_032440_1_2_6"/>
<dbReference type="OrthoDB" id="9766445at2"/>
<dbReference type="PhylomeDB" id="P44425"/>
<dbReference type="BioCyc" id="HINF71421:G1GJ1-1630-MONOMER"/>
<dbReference type="Proteomes" id="UP000000579">
    <property type="component" value="Chromosome"/>
</dbReference>
<dbReference type="GO" id="GO:0005829">
    <property type="term" value="C:cytosol"/>
    <property type="evidence" value="ECO:0000318"/>
    <property type="project" value="GO_Central"/>
</dbReference>
<dbReference type="GO" id="GO:0042802">
    <property type="term" value="F:identical protein binding"/>
    <property type="evidence" value="ECO:0000318"/>
    <property type="project" value="GO_Central"/>
</dbReference>
<dbReference type="GO" id="GO:0004069">
    <property type="term" value="F:L-aspartate:2-oxoglutarate aminotransferase activity"/>
    <property type="evidence" value="ECO:0000318"/>
    <property type="project" value="GO_Central"/>
</dbReference>
<dbReference type="GO" id="GO:0004838">
    <property type="term" value="F:L-tyrosine-2-oxoglutarate transaminase activity"/>
    <property type="evidence" value="ECO:0000318"/>
    <property type="project" value="GO_Central"/>
</dbReference>
<dbReference type="GO" id="GO:0030170">
    <property type="term" value="F:pyridoxal phosphate binding"/>
    <property type="evidence" value="ECO:0000318"/>
    <property type="project" value="GO_Central"/>
</dbReference>
<dbReference type="GO" id="GO:0033585">
    <property type="term" value="P:L-phenylalanine biosynthetic process from chorismate via phenylpyruvate"/>
    <property type="evidence" value="ECO:0000318"/>
    <property type="project" value="GO_Central"/>
</dbReference>
<dbReference type="CDD" id="cd00609">
    <property type="entry name" value="AAT_like"/>
    <property type="match status" value="1"/>
</dbReference>
<dbReference type="FunFam" id="3.40.640.10:FF:000015">
    <property type="entry name" value="Aspartate aminotransferase"/>
    <property type="match status" value="1"/>
</dbReference>
<dbReference type="FunFam" id="3.90.1150.10:FF:000001">
    <property type="entry name" value="Aspartate aminotransferase"/>
    <property type="match status" value="1"/>
</dbReference>
<dbReference type="Gene3D" id="3.90.1150.10">
    <property type="entry name" value="Aspartate Aminotransferase, domain 1"/>
    <property type="match status" value="1"/>
</dbReference>
<dbReference type="Gene3D" id="3.40.640.10">
    <property type="entry name" value="Type I PLP-dependent aspartate aminotransferase-like (Major domain)"/>
    <property type="match status" value="1"/>
</dbReference>
<dbReference type="InterPro" id="IPR004839">
    <property type="entry name" value="Aminotransferase_I/II_large"/>
</dbReference>
<dbReference type="InterPro" id="IPR000796">
    <property type="entry name" value="Asp_trans"/>
</dbReference>
<dbReference type="InterPro" id="IPR004838">
    <property type="entry name" value="NHTrfase_class1_PyrdxlP-BS"/>
</dbReference>
<dbReference type="InterPro" id="IPR015424">
    <property type="entry name" value="PyrdxlP-dep_Trfase"/>
</dbReference>
<dbReference type="InterPro" id="IPR015421">
    <property type="entry name" value="PyrdxlP-dep_Trfase_major"/>
</dbReference>
<dbReference type="InterPro" id="IPR015422">
    <property type="entry name" value="PyrdxlP-dep_Trfase_small"/>
</dbReference>
<dbReference type="NCBIfam" id="NF006719">
    <property type="entry name" value="PRK09257.1"/>
    <property type="match status" value="1"/>
</dbReference>
<dbReference type="PANTHER" id="PTHR11879">
    <property type="entry name" value="ASPARTATE AMINOTRANSFERASE"/>
    <property type="match status" value="1"/>
</dbReference>
<dbReference type="PANTHER" id="PTHR11879:SF22">
    <property type="entry name" value="ASPARTATE AMINOTRANSFERASE, MITOCHONDRIAL"/>
    <property type="match status" value="1"/>
</dbReference>
<dbReference type="Pfam" id="PF00155">
    <property type="entry name" value="Aminotran_1_2"/>
    <property type="match status" value="1"/>
</dbReference>
<dbReference type="PRINTS" id="PR00799">
    <property type="entry name" value="TRANSAMINASE"/>
</dbReference>
<dbReference type="SUPFAM" id="SSF53383">
    <property type="entry name" value="PLP-dependent transferases"/>
    <property type="match status" value="1"/>
</dbReference>
<dbReference type="PROSITE" id="PS00105">
    <property type="entry name" value="AA_TRANSFER_CLASS_1"/>
    <property type="match status" value="1"/>
</dbReference>
<accession>P44425</accession>
<feature type="chain" id="PRO_0000123841" description="Aspartate aminotransferase">
    <location>
        <begin position="1"/>
        <end position="396"/>
    </location>
</feature>
<feature type="binding site" evidence="1">
    <location>
        <position position="34"/>
    </location>
    <ligand>
        <name>L-aspartate</name>
        <dbReference type="ChEBI" id="CHEBI:29991"/>
    </ligand>
</feature>
<feature type="binding site" evidence="1">
    <location>
        <position position="130"/>
    </location>
    <ligand>
        <name>L-aspartate</name>
        <dbReference type="ChEBI" id="CHEBI:29991"/>
    </ligand>
</feature>
<feature type="binding site" evidence="1">
    <location>
        <position position="183"/>
    </location>
    <ligand>
        <name>L-aspartate</name>
        <dbReference type="ChEBI" id="CHEBI:29991"/>
    </ligand>
</feature>
<feature type="binding site" evidence="1">
    <location>
        <position position="374"/>
    </location>
    <ligand>
        <name>L-aspartate</name>
        <dbReference type="ChEBI" id="CHEBI:29991"/>
    </ligand>
</feature>
<feature type="modified residue" description="N6-(pyridoxal phosphate)lysine" evidence="1">
    <location>
        <position position="246"/>
    </location>
</feature>
<sequence length="396" mass="44321">MFEHIKAAPADPILGLGEAFKSETRENKINLGIGVYKDAQGTTPIMHAVKEAEKRLFDKEKTKNYLTIDGIADYNEQTKALLFGKDSEVIQSNRARTVQSLGGTGALRIAAEFIKRQTKAQNVWISTPTWPNHNAIFNAVGMTIREYRYYDAERKALDWEHLLEDLSQASEGDVVLLHGCCHNPTGIDPTPEQWQELAALSAKNGWLPLFDFAYQGLANGLDEDAYGLRAFAANHKELLVASSFSKNFGLYNERVGAFTLVAENAEIASTSLTQVKSIIRTLYSNPASHGGATVATVLNDAQLRQEWENELTEMRERIKKMRHLFVQLLKEYGAEQDFSFIIEQNGMFSFSGLTGEQVDRLKNEFAIYAVRSGRINVAGITEDNIRYLCESIVKVL</sequence>
<gene>
    <name type="primary">aspC</name>
    <name type="ordered locus">HI_1617</name>
</gene>
<evidence type="ECO:0000250" key="1"/>
<evidence type="ECO:0000305" key="2"/>
<proteinExistence type="inferred from homology"/>